<organism>
    <name type="scientific">Halobacterium salinarum (strain ATCC 29341 / DSM 671 / R1)</name>
    <dbReference type="NCBI Taxonomy" id="478009"/>
    <lineage>
        <taxon>Archaea</taxon>
        <taxon>Methanobacteriati</taxon>
        <taxon>Methanobacteriota</taxon>
        <taxon>Stenosarchaea group</taxon>
        <taxon>Halobacteria</taxon>
        <taxon>Halobacteriales</taxon>
        <taxon>Halobacteriaceae</taxon>
        <taxon>Halobacterium</taxon>
        <taxon>Halobacterium salinarum NRC-34001</taxon>
    </lineage>
</organism>
<proteinExistence type="inferred from homology"/>
<sequence length="728" mass="80397">MGRRKKIVEQCERLMDNPEQIRNIAIAAHVDHGKTTLTDNLLAGAGMISEDTAGQQLAMDTEEDEQERGITIDAANVSMTHEYEGDDHLINLIDTPGHVDFGGDVTRAMRAVDGALVVVDAVEGAMPQTETVVRQALREGVKPTLFINKVDRLISELQEGPEEMQERLLSVIGDVNELIRGMTEEKDDIEDWTVSVEDGTVAFGSALYKWGVSMPSMQRTGMDFGDIIDLERSDKREELHEQTPLADVVLDMVAEHFPNPIDAQPRRIPTVWRGDADSEIAESMRLVDEDGEVVLMVTDIGVDPHAGEIAAGRVFSGTLEKGQELYVSGTAGKNRVQSVGIYMGGEREEVDEVPAGNIAAVTGLKDAIAGSTVSNEEMTPFESIDHISEPVITKSIEAQNMDDLPKLIETLRQVSKEDPTISIEINEDTGEHLISGQGELHLEVQTQRIERNQGIPVTTGEPIVVYRETPTSDSQEVEGVSPNRHNKFYITVEQLSDDVLEEIRLGEVSMDMPEQERREVLQEAGMDKETSQDVENIIGRNIFIDDTKGIQHLNETMELVVDGLTDSLEDGPLAAEPVEGALIRLHDARLHEDAIHRGPAQVIPATRDAVHRALIDADIRLLEPIQDVRIDVPSEHMGAASGEVQGRRGRVDDMYQEGDLMVVEGIAPVDEMIGFSSDIRSATEGRASWNTENAGFRVMADNLQREIIMEIRERKGMKTELPESITHF</sequence>
<evidence type="ECO:0000255" key="1">
    <source>
        <dbReference type="HAMAP-Rule" id="MF_00054"/>
    </source>
</evidence>
<comment type="function">
    <text evidence="1">Catalyzes the GTP-dependent ribosomal translocation step during translation elongation. During this step, the ribosome changes from the pre-translocational (PRE) to the post-translocational (POST) state as the newly formed A-site-bound peptidyl-tRNA and P-site-bound deacylated tRNA move to the P and E sites, respectively. Catalyzes the coordinated movement of the two tRNA molecules, the mRNA and conformational changes in the ribosome.</text>
</comment>
<comment type="subcellular location">
    <subcellularLocation>
        <location evidence="1">Cytoplasm</location>
    </subcellularLocation>
</comment>
<comment type="similarity">
    <text evidence="1">Belongs to the TRAFAC class translation factor GTPase superfamily. Classic translation factor GTPase family. EF-G/EF-2 subfamily.</text>
</comment>
<accession>B0R8C8</accession>
<name>EF2_HALS3</name>
<protein>
    <recommendedName>
        <fullName evidence="1">Elongation factor 2</fullName>
        <shortName evidence="1">EF-2</shortName>
    </recommendedName>
</protein>
<keyword id="KW-0963">Cytoplasm</keyword>
<keyword id="KW-0251">Elongation factor</keyword>
<keyword id="KW-0342">GTP-binding</keyword>
<keyword id="KW-0547">Nucleotide-binding</keyword>
<keyword id="KW-0648">Protein biosynthesis</keyword>
<feature type="chain" id="PRO_1000091717" description="Elongation factor 2">
    <location>
        <begin position="1"/>
        <end position="728"/>
    </location>
</feature>
<feature type="domain" description="tr-type G">
    <location>
        <begin position="19"/>
        <end position="261"/>
    </location>
</feature>
<feature type="binding site" evidence="1">
    <location>
        <begin position="28"/>
        <end position="35"/>
    </location>
    <ligand>
        <name>GTP</name>
        <dbReference type="ChEBI" id="CHEBI:37565"/>
    </ligand>
</feature>
<feature type="binding site" evidence="1">
    <location>
        <begin position="94"/>
        <end position="98"/>
    </location>
    <ligand>
        <name>GTP</name>
        <dbReference type="ChEBI" id="CHEBI:37565"/>
    </ligand>
</feature>
<feature type="binding site" evidence="1">
    <location>
        <begin position="148"/>
        <end position="151"/>
    </location>
    <ligand>
        <name>GTP</name>
        <dbReference type="ChEBI" id="CHEBI:37565"/>
    </ligand>
</feature>
<feature type="modified residue" description="Diphthamide" evidence="1">
    <location>
        <position position="596"/>
    </location>
</feature>
<reference key="1">
    <citation type="journal article" date="2008" name="Genomics">
        <title>Evolution in the laboratory: the genome of Halobacterium salinarum strain R1 compared to that of strain NRC-1.</title>
        <authorList>
            <person name="Pfeiffer F."/>
            <person name="Schuster S.C."/>
            <person name="Broicher A."/>
            <person name="Falb M."/>
            <person name="Palm P."/>
            <person name="Rodewald K."/>
            <person name="Ruepp A."/>
            <person name="Soppa J."/>
            <person name="Tittor J."/>
            <person name="Oesterhelt D."/>
        </authorList>
    </citation>
    <scope>NUCLEOTIDE SEQUENCE [LARGE SCALE GENOMIC DNA]</scope>
    <source>
        <strain>ATCC 29341 / DSM 671 / R1</strain>
    </source>
</reference>
<dbReference type="EMBL" id="AM774415">
    <property type="protein sequence ID" value="CAP14997.1"/>
    <property type="molecule type" value="Genomic_DNA"/>
</dbReference>
<dbReference type="RefSeq" id="WP_010903990.1">
    <property type="nucleotide sequence ID" value="NC_010364.1"/>
</dbReference>
<dbReference type="SMR" id="B0R8C8"/>
<dbReference type="EnsemblBacteria" id="CAP14997">
    <property type="protein sequence ID" value="CAP14997"/>
    <property type="gene ID" value="OE_4729R"/>
</dbReference>
<dbReference type="KEGG" id="hsl:OE_4729R"/>
<dbReference type="HOGENOM" id="CLU_002794_11_1_2"/>
<dbReference type="PhylomeDB" id="B0R8C8"/>
<dbReference type="Proteomes" id="UP000001321">
    <property type="component" value="Chromosome"/>
</dbReference>
<dbReference type="GO" id="GO:0005829">
    <property type="term" value="C:cytosol"/>
    <property type="evidence" value="ECO:0007669"/>
    <property type="project" value="TreeGrafter"/>
</dbReference>
<dbReference type="GO" id="GO:1990904">
    <property type="term" value="C:ribonucleoprotein complex"/>
    <property type="evidence" value="ECO:0007669"/>
    <property type="project" value="TreeGrafter"/>
</dbReference>
<dbReference type="GO" id="GO:0005525">
    <property type="term" value="F:GTP binding"/>
    <property type="evidence" value="ECO:0007669"/>
    <property type="project" value="UniProtKB-UniRule"/>
</dbReference>
<dbReference type="GO" id="GO:0003924">
    <property type="term" value="F:GTPase activity"/>
    <property type="evidence" value="ECO:0007669"/>
    <property type="project" value="InterPro"/>
</dbReference>
<dbReference type="GO" id="GO:0003746">
    <property type="term" value="F:translation elongation factor activity"/>
    <property type="evidence" value="ECO:0007669"/>
    <property type="project" value="UniProtKB-UniRule"/>
</dbReference>
<dbReference type="CDD" id="cd01681">
    <property type="entry name" value="aeEF2_snRNP_like_IV"/>
    <property type="match status" value="1"/>
</dbReference>
<dbReference type="CDD" id="cd01885">
    <property type="entry name" value="EF2"/>
    <property type="match status" value="1"/>
</dbReference>
<dbReference type="CDD" id="cd16268">
    <property type="entry name" value="EF2_II"/>
    <property type="match status" value="1"/>
</dbReference>
<dbReference type="CDD" id="cd01514">
    <property type="entry name" value="Elongation_Factor_C"/>
    <property type="match status" value="1"/>
</dbReference>
<dbReference type="FunFam" id="2.40.30.10:FF:000110">
    <property type="entry name" value="Elongation factor 2"/>
    <property type="match status" value="1"/>
</dbReference>
<dbReference type="FunFam" id="3.30.70.240:FF:000010">
    <property type="entry name" value="Elongation factor 2"/>
    <property type="match status" value="1"/>
</dbReference>
<dbReference type="FunFam" id="3.40.50.300:FF:000684">
    <property type="entry name" value="Elongation factor 2"/>
    <property type="match status" value="1"/>
</dbReference>
<dbReference type="FunFam" id="3.30.70.870:FF:000002">
    <property type="entry name" value="Translation elongation factor 2"/>
    <property type="match status" value="1"/>
</dbReference>
<dbReference type="Gene3D" id="3.30.230.10">
    <property type="match status" value="1"/>
</dbReference>
<dbReference type="Gene3D" id="3.30.70.240">
    <property type="match status" value="1"/>
</dbReference>
<dbReference type="Gene3D" id="3.30.70.870">
    <property type="entry name" value="Elongation Factor G (Translational Gtpase), domain 3"/>
    <property type="match status" value="1"/>
</dbReference>
<dbReference type="Gene3D" id="3.40.50.300">
    <property type="entry name" value="P-loop containing nucleotide triphosphate hydrolases"/>
    <property type="match status" value="1"/>
</dbReference>
<dbReference type="Gene3D" id="2.40.30.10">
    <property type="entry name" value="Translation factors"/>
    <property type="match status" value="1"/>
</dbReference>
<dbReference type="HAMAP" id="MF_00054_A">
    <property type="entry name" value="EF_G_EF_2_A"/>
    <property type="match status" value="1"/>
</dbReference>
<dbReference type="InterPro" id="IPR041095">
    <property type="entry name" value="EFG_II"/>
</dbReference>
<dbReference type="InterPro" id="IPR035647">
    <property type="entry name" value="EFG_III/V"/>
</dbReference>
<dbReference type="InterPro" id="IPR000640">
    <property type="entry name" value="EFG_V-like"/>
</dbReference>
<dbReference type="InterPro" id="IPR004161">
    <property type="entry name" value="EFTu-like_2"/>
</dbReference>
<dbReference type="InterPro" id="IPR031157">
    <property type="entry name" value="G_TR_CS"/>
</dbReference>
<dbReference type="InterPro" id="IPR027417">
    <property type="entry name" value="P-loop_NTPase"/>
</dbReference>
<dbReference type="InterPro" id="IPR020568">
    <property type="entry name" value="Ribosomal_Su5_D2-typ_SF"/>
</dbReference>
<dbReference type="InterPro" id="IPR014721">
    <property type="entry name" value="Ribsml_uS5_D2-typ_fold_subgr"/>
</dbReference>
<dbReference type="InterPro" id="IPR005225">
    <property type="entry name" value="Small_GTP-bd"/>
</dbReference>
<dbReference type="InterPro" id="IPR000795">
    <property type="entry name" value="T_Tr_GTP-bd_dom"/>
</dbReference>
<dbReference type="InterPro" id="IPR009000">
    <property type="entry name" value="Transl_B-barrel_sf"/>
</dbReference>
<dbReference type="InterPro" id="IPR004543">
    <property type="entry name" value="Transl_elong_EFG/EF2_arc"/>
</dbReference>
<dbReference type="InterPro" id="IPR005517">
    <property type="entry name" value="Transl_elong_EFG/EF2_IV"/>
</dbReference>
<dbReference type="NCBIfam" id="TIGR00490">
    <property type="entry name" value="aEF-2"/>
    <property type="match status" value="1"/>
</dbReference>
<dbReference type="NCBIfam" id="TIGR00231">
    <property type="entry name" value="small_GTP"/>
    <property type="match status" value="1"/>
</dbReference>
<dbReference type="PANTHER" id="PTHR42908:SF3">
    <property type="entry name" value="ELONGATION FACTOR-LIKE GTPASE 1"/>
    <property type="match status" value="1"/>
</dbReference>
<dbReference type="PANTHER" id="PTHR42908">
    <property type="entry name" value="TRANSLATION ELONGATION FACTOR-RELATED"/>
    <property type="match status" value="1"/>
</dbReference>
<dbReference type="Pfam" id="PF00679">
    <property type="entry name" value="EFG_C"/>
    <property type="match status" value="1"/>
</dbReference>
<dbReference type="Pfam" id="PF14492">
    <property type="entry name" value="EFG_III"/>
    <property type="match status" value="1"/>
</dbReference>
<dbReference type="Pfam" id="PF03764">
    <property type="entry name" value="EFG_IV"/>
    <property type="match status" value="1"/>
</dbReference>
<dbReference type="Pfam" id="PF00009">
    <property type="entry name" value="GTP_EFTU"/>
    <property type="match status" value="1"/>
</dbReference>
<dbReference type="Pfam" id="PF03144">
    <property type="entry name" value="GTP_EFTU_D2"/>
    <property type="match status" value="1"/>
</dbReference>
<dbReference type="PRINTS" id="PR00315">
    <property type="entry name" value="ELONGATNFCT"/>
</dbReference>
<dbReference type="SMART" id="SM00838">
    <property type="entry name" value="EFG_C"/>
    <property type="match status" value="1"/>
</dbReference>
<dbReference type="SMART" id="SM00889">
    <property type="entry name" value="EFG_IV"/>
    <property type="match status" value="1"/>
</dbReference>
<dbReference type="SUPFAM" id="SSF54980">
    <property type="entry name" value="EF-G C-terminal domain-like"/>
    <property type="match status" value="2"/>
</dbReference>
<dbReference type="SUPFAM" id="SSF52540">
    <property type="entry name" value="P-loop containing nucleoside triphosphate hydrolases"/>
    <property type="match status" value="1"/>
</dbReference>
<dbReference type="SUPFAM" id="SSF54211">
    <property type="entry name" value="Ribosomal protein S5 domain 2-like"/>
    <property type="match status" value="1"/>
</dbReference>
<dbReference type="SUPFAM" id="SSF50447">
    <property type="entry name" value="Translation proteins"/>
    <property type="match status" value="1"/>
</dbReference>
<dbReference type="PROSITE" id="PS00301">
    <property type="entry name" value="G_TR_1"/>
    <property type="match status" value="1"/>
</dbReference>
<dbReference type="PROSITE" id="PS51722">
    <property type="entry name" value="G_TR_2"/>
    <property type="match status" value="1"/>
</dbReference>
<gene>
    <name evidence="1" type="primary">fusA</name>
    <name type="ordered locus">OE_4729R</name>
</gene>